<accession>Q46ID5</accession>
<proteinExistence type="inferred from homology"/>
<name>TIG_PROMT</name>
<keyword id="KW-0131">Cell cycle</keyword>
<keyword id="KW-0132">Cell division</keyword>
<keyword id="KW-0143">Chaperone</keyword>
<keyword id="KW-0963">Cytoplasm</keyword>
<keyword id="KW-0413">Isomerase</keyword>
<keyword id="KW-1185">Reference proteome</keyword>
<keyword id="KW-0697">Rotamase</keyword>
<sequence length="472" mass="52973">MSAAKLNVKTSAKPNSRIAVEVEVPANRCKNSYDEALSKLSRSISIPGFRKGKVPKTVVIQQLGVKRIQASALESLLQKVWTETLDQEGIEPLCEPELEDGFETILENFNPEKTLILKLETDITPIPTLKKSSGLTAEVENLIFDPKKVDELIEQSRAQLATKVPVSDRAAQKGDIALVSFKGSFSDDGSEIEGGSADSIEIELEQGRMIPGFIEGVIGMNINDEKTLKCEFPKDYHQEEAKGRKAEFNVSLEDLKIKELPELNDEFAKQASDKENMSDLRADLEKRLKEDNDRKQAKTRQDSLLDVLVKELEVDLPKSLIDQEVRTIVEQTAQNFAQQGIDVKSMFTPELVKSLMESSKGEAEKKLRQKFALQALAKSEKIEVSDKEINSKLEQVEADIKLSNEKNIDAERLKEAITDDLLQEKLFAWLEENNTVVEKTPEKARDQIKEKSSKKKTTKTNKEKKSSKTPKS</sequence>
<organism>
    <name type="scientific">Prochlorococcus marinus (strain NATL2A)</name>
    <dbReference type="NCBI Taxonomy" id="59920"/>
    <lineage>
        <taxon>Bacteria</taxon>
        <taxon>Bacillati</taxon>
        <taxon>Cyanobacteriota</taxon>
        <taxon>Cyanophyceae</taxon>
        <taxon>Synechococcales</taxon>
        <taxon>Prochlorococcaceae</taxon>
        <taxon>Prochlorococcus</taxon>
    </lineage>
</organism>
<gene>
    <name evidence="1" type="primary">tig</name>
    <name type="ordered locus">PMN2A_1253</name>
</gene>
<protein>
    <recommendedName>
        <fullName evidence="1">Trigger factor</fullName>
        <shortName evidence="1">TF</shortName>
        <ecNumber evidence="1">5.2.1.8</ecNumber>
    </recommendedName>
    <alternativeName>
        <fullName evidence="1">PPIase</fullName>
    </alternativeName>
</protein>
<feature type="chain" id="PRO_0000256589" description="Trigger factor">
    <location>
        <begin position="1"/>
        <end position="472"/>
    </location>
</feature>
<feature type="domain" description="PPIase FKBP-type" evidence="1">
    <location>
        <begin position="174"/>
        <end position="261"/>
    </location>
</feature>
<feature type="region of interest" description="Disordered" evidence="2">
    <location>
        <begin position="438"/>
        <end position="472"/>
    </location>
</feature>
<feature type="compositionally biased region" description="Basic and acidic residues" evidence="2">
    <location>
        <begin position="439"/>
        <end position="451"/>
    </location>
</feature>
<dbReference type="EC" id="5.2.1.8" evidence="1"/>
<dbReference type="EMBL" id="CP000095">
    <property type="protein sequence ID" value="AAZ58743.1"/>
    <property type="molecule type" value="Genomic_DNA"/>
</dbReference>
<dbReference type="RefSeq" id="WP_011295597.1">
    <property type="nucleotide sequence ID" value="NC_007335.2"/>
</dbReference>
<dbReference type="SMR" id="Q46ID5"/>
<dbReference type="STRING" id="59920.PMN2A_1253"/>
<dbReference type="KEGG" id="pmn:PMN2A_1253"/>
<dbReference type="HOGENOM" id="CLU_033058_3_1_3"/>
<dbReference type="OrthoDB" id="9767721at2"/>
<dbReference type="PhylomeDB" id="Q46ID5"/>
<dbReference type="Proteomes" id="UP000002535">
    <property type="component" value="Chromosome"/>
</dbReference>
<dbReference type="GO" id="GO:0005737">
    <property type="term" value="C:cytoplasm"/>
    <property type="evidence" value="ECO:0007669"/>
    <property type="project" value="UniProtKB-SubCell"/>
</dbReference>
<dbReference type="GO" id="GO:0003755">
    <property type="term" value="F:peptidyl-prolyl cis-trans isomerase activity"/>
    <property type="evidence" value="ECO:0007669"/>
    <property type="project" value="UniProtKB-UniRule"/>
</dbReference>
<dbReference type="GO" id="GO:0044183">
    <property type="term" value="F:protein folding chaperone"/>
    <property type="evidence" value="ECO:0007669"/>
    <property type="project" value="TreeGrafter"/>
</dbReference>
<dbReference type="GO" id="GO:0043022">
    <property type="term" value="F:ribosome binding"/>
    <property type="evidence" value="ECO:0007669"/>
    <property type="project" value="TreeGrafter"/>
</dbReference>
<dbReference type="GO" id="GO:0051083">
    <property type="term" value="P:'de novo' cotranslational protein folding"/>
    <property type="evidence" value="ECO:0007669"/>
    <property type="project" value="TreeGrafter"/>
</dbReference>
<dbReference type="GO" id="GO:0051301">
    <property type="term" value="P:cell division"/>
    <property type="evidence" value="ECO:0007669"/>
    <property type="project" value="UniProtKB-KW"/>
</dbReference>
<dbReference type="GO" id="GO:0061077">
    <property type="term" value="P:chaperone-mediated protein folding"/>
    <property type="evidence" value="ECO:0007669"/>
    <property type="project" value="TreeGrafter"/>
</dbReference>
<dbReference type="GO" id="GO:0015031">
    <property type="term" value="P:protein transport"/>
    <property type="evidence" value="ECO:0007669"/>
    <property type="project" value="UniProtKB-UniRule"/>
</dbReference>
<dbReference type="GO" id="GO:0043335">
    <property type="term" value="P:protein unfolding"/>
    <property type="evidence" value="ECO:0007669"/>
    <property type="project" value="TreeGrafter"/>
</dbReference>
<dbReference type="FunFam" id="3.10.50.40:FF:000001">
    <property type="entry name" value="Trigger factor"/>
    <property type="match status" value="1"/>
</dbReference>
<dbReference type="FunFam" id="3.30.70.1050:FF:000004">
    <property type="entry name" value="Trigger factor"/>
    <property type="match status" value="1"/>
</dbReference>
<dbReference type="Gene3D" id="3.10.50.40">
    <property type="match status" value="1"/>
</dbReference>
<dbReference type="Gene3D" id="3.30.70.1050">
    <property type="entry name" value="Trigger factor ribosome-binding domain"/>
    <property type="match status" value="1"/>
</dbReference>
<dbReference type="Gene3D" id="1.10.3120.10">
    <property type="entry name" value="Trigger factor, C-terminal domain"/>
    <property type="match status" value="1"/>
</dbReference>
<dbReference type="HAMAP" id="MF_00303">
    <property type="entry name" value="Trigger_factor_Tig"/>
    <property type="match status" value="1"/>
</dbReference>
<dbReference type="InterPro" id="IPR046357">
    <property type="entry name" value="PPIase_dom_sf"/>
</dbReference>
<dbReference type="InterPro" id="IPR001179">
    <property type="entry name" value="PPIase_FKBP_dom"/>
</dbReference>
<dbReference type="InterPro" id="IPR005215">
    <property type="entry name" value="Trig_fac"/>
</dbReference>
<dbReference type="InterPro" id="IPR008880">
    <property type="entry name" value="Trigger_fac_C"/>
</dbReference>
<dbReference type="InterPro" id="IPR037041">
    <property type="entry name" value="Trigger_fac_C_sf"/>
</dbReference>
<dbReference type="InterPro" id="IPR008881">
    <property type="entry name" value="Trigger_fac_ribosome-bd_bac"/>
</dbReference>
<dbReference type="InterPro" id="IPR036611">
    <property type="entry name" value="Trigger_fac_ribosome-bd_sf"/>
</dbReference>
<dbReference type="InterPro" id="IPR027304">
    <property type="entry name" value="Trigger_fact/SurA_dom_sf"/>
</dbReference>
<dbReference type="NCBIfam" id="TIGR00115">
    <property type="entry name" value="tig"/>
    <property type="match status" value="1"/>
</dbReference>
<dbReference type="PANTHER" id="PTHR30560">
    <property type="entry name" value="TRIGGER FACTOR CHAPERONE AND PEPTIDYL-PROLYL CIS/TRANS ISOMERASE"/>
    <property type="match status" value="1"/>
</dbReference>
<dbReference type="PANTHER" id="PTHR30560:SF3">
    <property type="entry name" value="TRIGGER FACTOR-LIKE PROTEIN TIG, CHLOROPLASTIC"/>
    <property type="match status" value="1"/>
</dbReference>
<dbReference type="Pfam" id="PF00254">
    <property type="entry name" value="FKBP_C"/>
    <property type="match status" value="1"/>
</dbReference>
<dbReference type="Pfam" id="PF05698">
    <property type="entry name" value="Trigger_C"/>
    <property type="match status" value="1"/>
</dbReference>
<dbReference type="Pfam" id="PF05697">
    <property type="entry name" value="Trigger_N"/>
    <property type="match status" value="1"/>
</dbReference>
<dbReference type="PIRSF" id="PIRSF003095">
    <property type="entry name" value="Trigger_factor"/>
    <property type="match status" value="1"/>
</dbReference>
<dbReference type="SUPFAM" id="SSF54534">
    <property type="entry name" value="FKBP-like"/>
    <property type="match status" value="1"/>
</dbReference>
<dbReference type="SUPFAM" id="SSF109998">
    <property type="entry name" value="Triger factor/SurA peptide-binding domain-like"/>
    <property type="match status" value="1"/>
</dbReference>
<dbReference type="SUPFAM" id="SSF102735">
    <property type="entry name" value="Trigger factor ribosome-binding domain"/>
    <property type="match status" value="1"/>
</dbReference>
<dbReference type="PROSITE" id="PS50059">
    <property type="entry name" value="FKBP_PPIASE"/>
    <property type="match status" value="1"/>
</dbReference>
<reference key="1">
    <citation type="journal article" date="2007" name="PLoS Genet.">
        <title>Patterns and implications of gene gain and loss in the evolution of Prochlorococcus.</title>
        <authorList>
            <person name="Kettler G.C."/>
            <person name="Martiny A.C."/>
            <person name="Huang K."/>
            <person name="Zucker J."/>
            <person name="Coleman M.L."/>
            <person name="Rodrigue S."/>
            <person name="Chen F."/>
            <person name="Lapidus A."/>
            <person name="Ferriera S."/>
            <person name="Johnson J."/>
            <person name="Steglich C."/>
            <person name="Church G.M."/>
            <person name="Richardson P."/>
            <person name="Chisholm S.W."/>
        </authorList>
    </citation>
    <scope>NUCLEOTIDE SEQUENCE [LARGE SCALE GENOMIC DNA]</scope>
    <source>
        <strain>NATL2A</strain>
    </source>
</reference>
<comment type="function">
    <text evidence="1">Involved in protein export. Acts as a chaperone by maintaining the newly synthesized protein in an open conformation. Functions as a peptidyl-prolyl cis-trans isomerase.</text>
</comment>
<comment type="catalytic activity">
    <reaction evidence="1">
        <text>[protein]-peptidylproline (omega=180) = [protein]-peptidylproline (omega=0)</text>
        <dbReference type="Rhea" id="RHEA:16237"/>
        <dbReference type="Rhea" id="RHEA-COMP:10747"/>
        <dbReference type="Rhea" id="RHEA-COMP:10748"/>
        <dbReference type="ChEBI" id="CHEBI:83833"/>
        <dbReference type="ChEBI" id="CHEBI:83834"/>
        <dbReference type="EC" id="5.2.1.8"/>
    </reaction>
</comment>
<comment type="subcellular location">
    <subcellularLocation>
        <location>Cytoplasm</location>
    </subcellularLocation>
    <text evidence="1">About half TF is bound to the ribosome near the polypeptide exit tunnel while the other half is free in the cytoplasm.</text>
</comment>
<comment type="domain">
    <text evidence="1">Consists of 3 domains; the N-terminus binds the ribosome, the middle domain has PPIase activity, while the C-terminus has intrinsic chaperone activity on its own.</text>
</comment>
<comment type="similarity">
    <text evidence="1">Belongs to the FKBP-type PPIase family. Tig subfamily.</text>
</comment>
<evidence type="ECO:0000255" key="1">
    <source>
        <dbReference type="HAMAP-Rule" id="MF_00303"/>
    </source>
</evidence>
<evidence type="ECO:0000256" key="2">
    <source>
        <dbReference type="SAM" id="MobiDB-lite"/>
    </source>
</evidence>